<keyword id="KW-0963">Cytoplasm</keyword>
<keyword id="KW-0671">Queuosine biosynthesis</keyword>
<keyword id="KW-1185">Reference proteome</keyword>
<keyword id="KW-0949">S-adenosyl-L-methionine</keyword>
<keyword id="KW-0808">Transferase</keyword>
<dbReference type="EC" id="2.4.99.17" evidence="1"/>
<dbReference type="EMBL" id="AE014075">
    <property type="protein sequence ID" value="AAN78993.1"/>
    <property type="molecule type" value="Genomic_DNA"/>
</dbReference>
<dbReference type="RefSeq" id="WP_001266507.1">
    <property type="nucleotide sequence ID" value="NZ_CP051263.1"/>
</dbReference>
<dbReference type="SMR" id="Q8FKC5"/>
<dbReference type="STRING" id="199310.c0515"/>
<dbReference type="KEGG" id="ecc:c0515"/>
<dbReference type="eggNOG" id="COG0809">
    <property type="taxonomic scope" value="Bacteria"/>
</dbReference>
<dbReference type="HOGENOM" id="CLU_039110_1_0_6"/>
<dbReference type="BioCyc" id="ECOL199310:C0515-MONOMER"/>
<dbReference type="UniPathway" id="UPA00392"/>
<dbReference type="Proteomes" id="UP000001410">
    <property type="component" value="Chromosome"/>
</dbReference>
<dbReference type="GO" id="GO:0005737">
    <property type="term" value="C:cytoplasm"/>
    <property type="evidence" value="ECO:0007669"/>
    <property type="project" value="UniProtKB-SubCell"/>
</dbReference>
<dbReference type="GO" id="GO:0051075">
    <property type="term" value="F:S-adenosylmethionine:tRNA ribosyltransferase-isomerase activity"/>
    <property type="evidence" value="ECO:0007669"/>
    <property type="project" value="UniProtKB-EC"/>
</dbReference>
<dbReference type="GO" id="GO:0008616">
    <property type="term" value="P:queuosine biosynthetic process"/>
    <property type="evidence" value="ECO:0007669"/>
    <property type="project" value="UniProtKB-UniRule"/>
</dbReference>
<dbReference type="GO" id="GO:0002099">
    <property type="term" value="P:tRNA wobble guanine modification"/>
    <property type="evidence" value="ECO:0007669"/>
    <property type="project" value="TreeGrafter"/>
</dbReference>
<dbReference type="FunFam" id="2.40.10.240:FF:000001">
    <property type="entry name" value="S-adenosylmethionine:tRNA ribosyltransferase-isomerase"/>
    <property type="match status" value="1"/>
</dbReference>
<dbReference type="FunFam" id="3.40.1780.10:FF:000001">
    <property type="entry name" value="S-adenosylmethionine:tRNA ribosyltransferase-isomerase"/>
    <property type="match status" value="1"/>
</dbReference>
<dbReference type="Gene3D" id="2.40.10.240">
    <property type="entry name" value="QueA-like"/>
    <property type="match status" value="1"/>
</dbReference>
<dbReference type="Gene3D" id="3.40.1780.10">
    <property type="entry name" value="QueA-like"/>
    <property type="match status" value="1"/>
</dbReference>
<dbReference type="HAMAP" id="MF_00113">
    <property type="entry name" value="QueA"/>
    <property type="match status" value="1"/>
</dbReference>
<dbReference type="InterPro" id="IPR003699">
    <property type="entry name" value="QueA"/>
</dbReference>
<dbReference type="InterPro" id="IPR042118">
    <property type="entry name" value="QueA_dom1"/>
</dbReference>
<dbReference type="InterPro" id="IPR042119">
    <property type="entry name" value="QueA_dom2"/>
</dbReference>
<dbReference type="InterPro" id="IPR036100">
    <property type="entry name" value="QueA_sf"/>
</dbReference>
<dbReference type="NCBIfam" id="NF001140">
    <property type="entry name" value="PRK00147.1"/>
    <property type="match status" value="1"/>
</dbReference>
<dbReference type="NCBIfam" id="TIGR00113">
    <property type="entry name" value="queA"/>
    <property type="match status" value="1"/>
</dbReference>
<dbReference type="PANTHER" id="PTHR30307">
    <property type="entry name" value="S-ADENOSYLMETHIONINE:TRNA RIBOSYLTRANSFERASE-ISOMERASE"/>
    <property type="match status" value="1"/>
</dbReference>
<dbReference type="PANTHER" id="PTHR30307:SF0">
    <property type="entry name" value="S-ADENOSYLMETHIONINE:TRNA RIBOSYLTRANSFERASE-ISOMERASE"/>
    <property type="match status" value="1"/>
</dbReference>
<dbReference type="Pfam" id="PF02547">
    <property type="entry name" value="Queuosine_synth"/>
    <property type="match status" value="1"/>
</dbReference>
<dbReference type="SUPFAM" id="SSF111337">
    <property type="entry name" value="QueA-like"/>
    <property type="match status" value="1"/>
</dbReference>
<organism>
    <name type="scientific">Escherichia coli O6:H1 (strain CFT073 / ATCC 700928 / UPEC)</name>
    <dbReference type="NCBI Taxonomy" id="199310"/>
    <lineage>
        <taxon>Bacteria</taxon>
        <taxon>Pseudomonadati</taxon>
        <taxon>Pseudomonadota</taxon>
        <taxon>Gammaproteobacteria</taxon>
        <taxon>Enterobacterales</taxon>
        <taxon>Enterobacteriaceae</taxon>
        <taxon>Escherichia</taxon>
    </lineage>
</organism>
<feature type="chain" id="PRO_0000165402" description="S-adenosylmethionine:tRNA ribosyltransferase-isomerase">
    <location>
        <begin position="1"/>
        <end position="356"/>
    </location>
</feature>
<name>QUEA_ECOL6</name>
<sequence length="356" mass="39396">MRVTDFSFELPESLIAHYPMPERSSCRLLSLDGPTGALTHGTFTDLLDKLNPGDLLVFNNTRVIPARLFGRKASGGKIEVLVERMLDDKRILAHIRASKAPKPGAELLLGDDESINATMTARHGALFEVEFNDQRSVLDILNSIGHMPLPPYIDRPDEDADRELYQTVYSEKPGAVAAPTAGLHFDEPLLEKLRAKGVEMAFVTLHVGAGTFQPVRVDTIEDHIMHSEYAEVPQDVVDAVLAAKARGNRVIAVGTTSVRSLESAAQAAKNDLIEPLFDDTQIFIYPGFQYKVVDALVTNFHLPESTLIMLVSAFAGYQHTMNAYKAAVEEKYRFFSYGDAMFITYNPQAINERVGE</sequence>
<proteinExistence type="inferred from homology"/>
<accession>Q8FKC5</accession>
<evidence type="ECO:0000255" key="1">
    <source>
        <dbReference type="HAMAP-Rule" id="MF_00113"/>
    </source>
</evidence>
<gene>
    <name evidence="1" type="primary">queA</name>
    <name type="ordered locus">c0515</name>
</gene>
<reference key="1">
    <citation type="journal article" date="2002" name="Proc. Natl. Acad. Sci. U.S.A.">
        <title>Extensive mosaic structure revealed by the complete genome sequence of uropathogenic Escherichia coli.</title>
        <authorList>
            <person name="Welch R.A."/>
            <person name="Burland V."/>
            <person name="Plunkett G. III"/>
            <person name="Redford P."/>
            <person name="Roesch P."/>
            <person name="Rasko D."/>
            <person name="Buckles E.L."/>
            <person name="Liou S.-R."/>
            <person name="Boutin A."/>
            <person name="Hackett J."/>
            <person name="Stroud D."/>
            <person name="Mayhew G.F."/>
            <person name="Rose D.J."/>
            <person name="Zhou S."/>
            <person name="Schwartz D.C."/>
            <person name="Perna N.T."/>
            <person name="Mobley H.L.T."/>
            <person name="Donnenberg M.S."/>
            <person name="Blattner F.R."/>
        </authorList>
    </citation>
    <scope>NUCLEOTIDE SEQUENCE [LARGE SCALE GENOMIC DNA]</scope>
    <source>
        <strain>CFT073 / ATCC 700928 / UPEC</strain>
    </source>
</reference>
<protein>
    <recommendedName>
        <fullName evidence="1">S-adenosylmethionine:tRNA ribosyltransferase-isomerase</fullName>
        <ecNumber evidence="1">2.4.99.17</ecNumber>
    </recommendedName>
    <alternativeName>
        <fullName evidence="1">Queuosine biosynthesis protein QueA</fullName>
    </alternativeName>
</protein>
<comment type="function">
    <text evidence="1">Transfers and isomerizes the ribose moiety from AdoMet to the 7-aminomethyl group of 7-deazaguanine (preQ1-tRNA) to give epoxyqueuosine (oQ-tRNA).</text>
</comment>
<comment type="catalytic activity">
    <reaction evidence="1">
        <text>7-aminomethyl-7-carbaguanosine(34) in tRNA + S-adenosyl-L-methionine = epoxyqueuosine(34) in tRNA + adenine + L-methionine + 2 H(+)</text>
        <dbReference type="Rhea" id="RHEA:32155"/>
        <dbReference type="Rhea" id="RHEA-COMP:10342"/>
        <dbReference type="Rhea" id="RHEA-COMP:18582"/>
        <dbReference type="ChEBI" id="CHEBI:15378"/>
        <dbReference type="ChEBI" id="CHEBI:16708"/>
        <dbReference type="ChEBI" id="CHEBI:57844"/>
        <dbReference type="ChEBI" id="CHEBI:59789"/>
        <dbReference type="ChEBI" id="CHEBI:82833"/>
        <dbReference type="ChEBI" id="CHEBI:194443"/>
        <dbReference type="EC" id="2.4.99.17"/>
    </reaction>
</comment>
<comment type="pathway">
    <text evidence="1">tRNA modification; tRNA-queuosine biosynthesis.</text>
</comment>
<comment type="subunit">
    <text evidence="1">Monomer.</text>
</comment>
<comment type="subcellular location">
    <subcellularLocation>
        <location evidence="1">Cytoplasm</location>
    </subcellularLocation>
</comment>
<comment type="similarity">
    <text evidence="1">Belongs to the QueA family.</text>
</comment>